<protein>
    <recommendedName>
        <fullName evidence="1">Imidazole glycerol phosphate synthase subunit HisF</fullName>
        <ecNumber evidence="1">4.3.2.10</ecNumber>
    </recommendedName>
    <alternativeName>
        <fullName evidence="1">IGP synthase cyclase subunit</fullName>
    </alternativeName>
    <alternativeName>
        <fullName evidence="1">IGP synthase subunit HisF</fullName>
    </alternativeName>
    <alternativeName>
        <fullName evidence="1">ImGP synthase subunit HisF</fullName>
        <shortName evidence="1">IGPS subunit HisF</shortName>
    </alternativeName>
</protein>
<feature type="chain" id="PRO_1000063174" description="Imidazole glycerol phosphate synthase subunit HisF">
    <location>
        <begin position="1"/>
        <end position="258"/>
    </location>
</feature>
<feature type="active site" evidence="1">
    <location>
        <position position="11"/>
    </location>
</feature>
<feature type="active site" evidence="1">
    <location>
        <position position="130"/>
    </location>
</feature>
<name>HIS6_YERP3</name>
<organism>
    <name type="scientific">Yersinia pseudotuberculosis serotype O:1b (strain IP 31758)</name>
    <dbReference type="NCBI Taxonomy" id="349747"/>
    <lineage>
        <taxon>Bacteria</taxon>
        <taxon>Pseudomonadati</taxon>
        <taxon>Pseudomonadota</taxon>
        <taxon>Gammaproteobacteria</taxon>
        <taxon>Enterobacterales</taxon>
        <taxon>Yersiniaceae</taxon>
        <taxon>Yersinia</taxon>
    </lineage>
</organism>
<reference key="1">
    <citation type="journal article" date="2007" name="PLoS Genet.">
        <title>The complete genome sequence of Yersinia pseudotuberculosis IP31758, the causative agent of Far East scarlet-like fever.</title>
        <authorList>
            <person name="Eppinger M."/>
            <person name="Rosovitz M.J."/>
            <person name="Fricke W.F."/>
            <person name="Rasko D.A."/>
            <person name="Kokorina G."/>
            <person name="Fayolle C."/>
            <person name="Lindler L.E."/>
            <person name="Carniel E."/>
            <person name="Ravel J."/>
        </authorList>
    </citation>
    <scope>NUCLEOTIDE SEQUENCE [LARGE SCALE GENOMIC DNA]</scope>
    <source>
        <strain>IP 31758</strain>
    </source>
</reference>
<accession>A7FJH5</accession>
<proteinExistence type="inferred from homology"/>
<comment type="function">
    <text evidence="1">IGPS catalyzes the conversion of PRFAR and glutamine to IGP, AICAR and glutamate. The HisF subunit catalyzes the cyclization activity that produces IGP and AICAR from PRFAR using the ammonia provided by the HisH subunit.</text>
</comment>
<comment type="catalytic activity">
    <reaction evidence="1">
        <text>5-[(5-phospho-1-deoxy-D-ribulos-1-ylimino)methylamino]-1-(5-phospho-beta-D-ribosyl)imidazole-4-carboxamide + L-glutamine = D-erythro-1-(imidazol-4-yl)glycerol 3-phosphate + 5-amino-1-(5-phospho-beta-D-ribosyl)imidazole-4-carboxamide + L-glutamate + H(+)</text>
        <dbReference type="Rhea" id="RHEA:24793"/>
        <dbReference type="ChEBI" id="CHEBI:15378"/>
        <dbReference type="ChEBI" id="CHEBI:29985"/>
        <dbReference type="ChEBI" id="CHEBI:58278"/>
        <dbReference type="ChEBI" id="CHEBI:58359"/>
        <dbReference type="ChEBI" id="CHEBI:58475"/>
        <dbReference type="ChEBI" id="CHEBI:58525"/>
        <dbReference type="EC" id="4.3.2.10"/>
    </reaction>
</comment>
<comment type="pathway">
    <text evidence="1">Amino-acid biosynthesis; L-histidine biosynthesis; L-histidine from 5-phospho-alpha-D-ribose 1-diphosphate: step 5/9.</text>
</comment>
<comment type="subunit">
    <text evidence="1">Heterodimer of HisH and HisF.</text>
</comment>
<comment type="subcellular location">
    <subcellularLocation>
        <location evidence="1">Cytoplasm</location>
    </subcellularLocation>
</comment>
<comment type="similarity">
    <text evidence="1">Belongs to the HisA/HisF family.</text>
</comment>
<sequence>MLAKRIIPCLDVKDGQVVKGVQFRNHEIIGDIVPLAQRYAQEGADELVFYDITASSDGRVVDKSWVARVAEVIDIPFCVAGGIKSVEDASQILTFGADKISINSPALADPTLITRLADRYGVQCIVVGIDTWYDTESDSYQVYQFTGDEKRTKATTWQTEDWVKEVQLRGAGEIVLNMMNQDGVRNGYDLRQLQQMRAICHVPLIASGGAGTPDHFLEAFRDADVDGALAASVFHKQIINIGELKKYLSEQGVEIRVC</sequence>
<gene>
    <name evidence="1" type="primary">hisF</name>
    <name type="ordered locus">YpsIP31758_2434</name>
</gene>
<keyword id="KW-0028">Amino-acid biosynthesis</keyword>
<keyword id="KW-0963">Cytoplasm</keyword>
<keyword id="KW-0368">Histidine biosynthesis</keyword>
<keyword id="KW-0456">Lyase</keyword>
<evidence type="ECO:0000255" key="1">
    <source>
        <dbReference type="HAMAP-Rule" id="MF_01013"/>
    </source>
</evidence>
<dbReference type="EC" id="4.3.2.10" evidence="1"/>
<dbReference type="EMBL" id="CP000720">
    <property type="protein sequence ID" value="ABS46181.1"/>
    <property type="molecule type" value="Genomic_DNA"/>
</dbReference>
<dbReference type="RefSeq" id="WP_002211890.1">
    <property type="nucleotide sequence ID" value="NC_009708.1"/>
</dbReference>
<dbReference type="SMR" id="A7FJH5"/>
<dbReference type="GeneID" id="57977025"/>
<dbReference type="KEGG" id="ypi:YpsIP31758_2434"/>
<dbReference type="HOGENOM" id="CLU_048577_4_0_6"/>
<dbReference type="UniPathway" id="UPA00031">
    <property type="reaction ID" value="UER00010"/>
</dbReference>
<dbReference type="Proteomes" id="UP000002412">
    <property type="component" value="Chromosome"/>
</dbReference>
<dbReference type="GO" id="GO:0005737">
    <property type="term" value="C:cytoplasm"/>
    <property type="evidence" value="ECO:0007669"/>
    <property type="project" value="UniProtKB-SubCell"/>
</dbReference>
<dbReference type="GO" id="GO:0000107">
    <property type="term" value="F:imidazoleglycerol-phosphate synthase activity"/>
    <property type="evidence" value="ECO:0007669"/>
    <property type="project" value="UniProtKB-UniRule"/>
</dbReference>
<dbReference type="GO" id="GO:0016829">
    <property type="term" value="F:lyase activity"/>
    <property type="evidence" value="ECO:0007669"/>
    <property type="project" value="UniProtKB-KW"/>
</dbReference>
<dbReference type="GO" id="GO:0000105">
    <property type="term" value="P:L-histidine biosynthetic process"/>
    <property type="evidence" value="ECO:0007669"/>
    <property type="project" value="UniProtKB-UniRule"/>
</dbReference>
<dbReference type="CDD" id="cd04731">
    <property type="entry name" value="HisF"/>
    <property type="match status" value="1"/>
</dbReference>
<dbReference type="FunFam" id="3.20.20.70:FF:000006">
    <property type="entry name" value="Imidazole glycerol phosphate synthase subunit HisF"/>
    <property type="match status" value="1"/>
</dbReference>
<dbReference type="Gene3D" id="3.20.20.70">
    <property type="entry name" value="Aldolase class I"/>
    <property type="match status" value="1"/>
</dbReference>
<dbReference type="HAMAP" id="MF_01013">
    <property type="entry name" value="HisF"/>
    <property type="match status" value="1"/>
</dbReference>
<dbReference type="InterPro" id="IPR013785">
    <property type="entry name" value="Aldolase_TIM"/>
</dbReference>
<dbReference type="InterPro" id="IPR006062">
    <property type="entry name" value="His_biosynth"/>
</dbReference>
<dbReference type="InterPro" id="IPR004651">
    <property type="entry name" value="HisF"/>
</dbReference>
<dbReference type="InterPro" id="IPR050064">
    <property type="entry name" value="IGPS_HisA/HisF"/>
</dbReference>
<dbReference type="InterPro" id="IPR011060">
    <property type="entry name" value="RibuloseP-bd_barrel"/>
</dbReference>
<dbReference type="NCBIfam" id="TIGR00735">
    <property type="entry name" value="hisF"/>
    <property type="match status" value="1"/>
</dbReference>
<dbReference type="PANTHER" id="PTHR21235:SF2">
    <property type="entry name" value="IMIDAZOLE GLYCEROL PHOSPHATE SYNTHASE HISHF"/>
    <property type="match status" value="1"/>
</dbReference>
<dbReference type="PANTHER" id="PTHR21235">
    <property type="entry name" value="IMIDAZOLE GLYCEROL PHOSPHATE SYNTHASE SUBUNIT HISF/H IGP SYNTHASE SUBUNIT HISF/H"/>
    <property type="match status" value="1"/>
</dbReference>
<dbReference type="Pfam" id="PF00977">
    <property type="entry name" value="His_biosynth"/>
    <property type="match status" value="1"/>
</dbReference>
<dbReference type="SUPFAM" id="SSF51366">
    <property type="entry name" value="Ribulose-phoshate binding barrel"/>
    <property type="match status" value="1"/>
</dbReference>